<protein>
    <recommendedName>
        <fullName>Mitochondrial thiamine pyrophosphate carrier</fullName>
    </recommendedName>
    <alternativeName>
        <fullName>Solute carrier family 25 member 19</fullName>
    </alternativeName>
</protein>
<organism>
    <name type="scientific">Pongo abelii</name>
    <name type="common">Sumatran orangutan</name>
    <name type="synonym">Pongo pygmaeus abelii</name>
    <dbReference type="NCBI Taxonomy" id="9601"/>
    <lineage>
        <taxon>Eukaryota</taxon>
        <taxon>Metazoa</taxon>
        <taxon>Chordata</taxon>
        <taxon>Craniata</taxon>
        <taxon>Vertebrata</taxon>
        <taxon>Euteleostomi</taxon>
        <taxon>Mammalia</taxon>
        <taxon>Eutheria</taxon>
        <taxon>Euarchontoglires</taxon>
        <taxon>Primates</taxon>
        <taxon>Haplorrhini</taxon>
        <taxon>Catarrhini</taxon>
        <taxon>Hominidae</taxon>
        <taxon>Pongo</taxon>
    </lineage>
</organism>
<proteinExistence type="evidence at transcript level"/>
<feature type="chain" id="PRO_0000090614" description="Mitochondrial thiamine pyrophosphate carrier">
    <location>
        <begin position="1"/>
        <end position="320"/>
    </location>
</feature>
<feature type="transmembrane region" description="Helical; Name=1" evidence="3">
    <location>
        <begin position="19"/>
        <end position="39"/>
    </location>
</feature>
<feature type="transmembrane region" description="Helical; Name=2" evidence="3">
    <location>
        <begin position="87"/>
        <end position="107"/>
    </location>
</feature>
<feature type="transmembrane region" description="Helical; Name=3" evidence="3">
    <location>
        <begin position="122"/>
        <end position="142"/>
    </location>
</feature>
<feature type="transmembrane region" description="Helical; Name=4" evidence="3">
    <location>
        <begin position="173"/>
        <end position="193"/>
    </location>
</feature>
<feature type="transmembrane region" description="Helical; Name=5" evidence="3">
    <location>
        <begin position="220"/>
        <end position="240"/>
    </location>
</feature>
<feature type="transmembrane region" description="Helical; Name=6" evidence="3">
    <location>
        <begin position="293"/>
        <end position="313"/>
    </location>
</feature>
<feature type="repeat" description="Solcar 1" evidence="4">
    <location>
        <begin position="13"/>
        <end position="106"/>
    </location>
</feature>
<feature type="repeat" description="Solcar 2" evidence="4">
    <location>
        <begin position="116"/>
        <end position="202"/>
    </location>
</feature>
<feature type="repeat" description="Solcar 3" evidence="4">
    <location>
        <begin position="214"/>
        <end position="309"/>
    </location>
</feature>
<feature type="short sequence motif" description="Substrate recognition" evidence="1">
    <location>
        <begin position="241"/>
        <end position="246"/>
    </location>
</feature>
<feature type="modified residue" description="Phosphoserine" evidence="2">
    <location>
        <position position="51"/>
    </location>
</feature>
<gene>
    <name type="primary">SLC25A19</name>
</gene>
<evidence type="ECO:0000250" key="1"/>
<evidence type="ECO:0000250" key="2">
    <source>
        <dbReference type="UniProtKB" id="Q9HC21"/>
    </source>
</evidence>
<evidence type="ECO:0000255" key="3"/>
<evidence type="ECO:0000255" key="4">
    <source>
        <dbReference type="PROSITE-ProRule" id="PRU00282"/>
    </source>
</evidence>
<evidence type="ECO:0000305" key="5"/>
<keyword id="KW-0050">Antiport</keyword>
<keyword id="KW-0472">Membrane</keyword>
<keyword id="KW-0496">Mitochondrion</keyword>
<keyword id="KW-0597">Phosphoprotein</keyword>
<keyword id="KW-1185">Reference proteome</keyword>
<keyword id="KW-0677">Repeat</keyword>
<keyword id="KW-0812">Transmembrane</keyword>
<keyword id="KW-1133">Transmembrane helix</keyword>
<keyword id="KW-0813">Transport</keyword>
<reference key="1">
    <citation type="submission" date="2004-11" db="EMBL/GenBank/DDBJ databases">
        <authorList>
            <consortium name="The German cDNA consortium"/>
        </authorList>
    </citation>
    <scope>NUCLEOTIDE SEQUENCE [LARGE SCALE MRNA]</scope>
    <source>
        <tissue>Brain cortex</tissue>
    </source>
</reference>
<sequence>MVGYDPKPDGRNNTKFQVAVAGSVSGLVTRALISPFDVIKIRFQLQHERLSRSDPNAKYHGILQASRQILQEEGPTAFWKGHIPAQILSIGYGAVQFLSFEMLTELVHRGSVYDAREFSVHFVCGGLAACMATLTVHPVDVLRTRFAAQGEPKVYNTLCHAVGTMYRSEGPQVFYKGLAPTLIAIFPYAGLQFSCYSSLKHLYKWAIPAEGKKNENLQNLLCGSGAGVISKTLTYPLDLFKKRLQVGGFEHARAAFGQVRRYKGLMDCAKQVLQKEGALGFFKGLSPSLLKAALSTGFMFFWYEFFCNVFHCMNRTASQR</sequence>
<name>TPC_PONAB</name>
<comment type="function">
    <text evidence="2">Mitochondrial transporter mediating uptake of thiamine diphosphate into mitochondria. It is not clear if the antiporter activity is affected by the membrane potential or by the proton electrochemical gradient.</text>
</comment>
<comment type="catalytic activity">
    <reaction evidence="2">
        <text>thiamine phosphate(out) + thiamine diphosphate(in) = thiamine phosphate(in) + thiamine diphosphate(out)</text>
        <dbReference type="Rhea" id="RHEA:73383"/>
        <dbReference type="ChEBI" id="CHEBI:37575"/>
        <dbReference type="ChEBI" id="CHEBI:58937"/>
    </reaction>
</comment>
<comment type="subcellular location">
    <subcellularLocation>
        <location evidence="2">Mitochondrion membrane</location>
        <topology evidence="3">Multi-pass membrane protein</topology>
    </subcellularLocation>
</comment>
<comment type="similarity">
    <text evidence="5">Belongs to the mitochondrial carrier (TC 2.A.29) family.</text>
</comment>
<comment type="caution">
    <text evidence="2">Previously identified as the mitochondrial deoxyribonucleotide carrier. However other experiments later demonstrated that SLC25A19 is a thiamine diphosphate transporter and not a mitochondrial deoxyribonucleotide carrier.</text>
</comment>
<dbReference type="EMBL" id="CR926117">
    <property type="protein sequence ID" value="CAI29742.1"/>
    <property type="molecule type" value="mRNA"/>
</dbReference>
<dbReference type="RefSeq" id="NP_001127123.1">
    <property type="nucleotide sequence ID" value="NM_001133651.1"/>
</dbReference>
<dbReference type="RefSeq" id="XP_024090032.1">
    <property type="nucleotide sequence ID" value="XM_024234264.3"/>
</dbReference>
<dbReference type="RefSeq" id="XP_024090033.1">
    <property type="nucleotide sequence ID" value="XM_024234265.3"/>
</dbReference>
<dbReference type="RefSeq" id="XP_024090034.1">
    <property type="nucleotide sequence ID" value="XM_024234266.3"/>
</dbReference>
<dbReference type="RefSeq" id="XP_024090035.1">
    <property type="nucleotide sequence ID" value="XM_024234267.3"/>
</dbReference>
<dbReference type="RefSeq" id="XP_054391225.1">
    <property type="nucleotide sequence ID" value="XM_054535250.2"/>
</dbReference>
<dbReference type="RefSeq" id="XP_054391226.1">
    <property type="nucleotide sequence ID" value="XM_054535251.2"/>
</dbReference>
<dbReference type="RefSeq" id="XP_054391227.1">
    <property type="nucleotide sequence ID" value="XM_054535252.2"/>
</dbReference>
<dbReference type="RefSeq" id="XP_054391228.1">
    <property type="nucleotide sequence ID" value="XM_054535253.2"/>
</dbReference>
<dbReference type="RefSeq" id="XP_054391229.1">
    <property type="nucleotide sequence ID" value="XM_054535254.2"/>
</dbReference>
<dbReference type="RefSeq" id="XP_063573984.1">
    <property type="nucleotide sequence ID" value="XM_063717914.1"/>
</dbReference>
<dbReference type="SMR" id="Q5NVC1"/>
<dbReference type="FunCoup" id="Q5NVC1">
    <property type="interactions" value="1289"/>
</dbReference>
<dbReference type="STRING" id="9601.ENSPPYP00000009685"/>
<dbReference type="Ensembl" id="ENSPPYT00000035360.1">
    <property type="protein sequence ID" value="ENSPPYP00000038003.1"/>
    <property type="gene ID" value="ENSPPYG00000008625.3"/>
</dbReference>
<dbReference type="GeneID" id="100174169"/>
<dbReference type="KEGG" id="pon:100174169"/>
<dbReference type="CTD" id="60386"/>
<dbReference type="GeneTree" id="ENSGT00550000074902"/>
<dbReference type="InParanoid" id="Q5NVC1"/>
<dbReference type="OMA" id="MYVCYGA"/>
<dbReference type="OrthoDB" id="18574at2759"/>
<dbReference type="Proteomes" id="UP000001595">
    <property type="component" value="Chromosome 17"/>
</dbReference>
<dbReference type="GO" id="GO:0005743">
    <property type="term" value="C:mitochondrial inner membrane"/>
    <property type="evidence" value="ECO:0007669"/>
    <property type="project" value="Ensembl"/>
</dbReference>
<dbReference type="GO" id="GO:0005739">
    <property type="term" value="C:mitochondrion"/>
    <property type="evidence" value="ECO:0000250"/>
    <property type="project" value="UniProtKB"/>
</dbReference>
<dbReference type="GO" id="GO:0015297">
    <property type="term" value="F:antiporter activity"/>
    <property type="evidence" value="ECO:0007669"/>
    <property type="project" value="UniProtKB-KW"/>
</dbReference>
<dbReference type="GO" id="GO:0090422">
    <property type="term" value="F:thiamine pyrophosphate transmembrane transporter activity"/>
    <property type="evidence" value="ECO:0000250"/>
    <property type="project" value="UniProtKB"/>
</dbReference>
<dbReference type="GO" id="GO:0009229">
    <property type="term" value="P:thiamine diphosphate biosynthetic process"/>
    <property type="evidence" value="ECO:0007669"/>
    <property type="project" value="Ensembl"/>
</dbReference>
<dbReference type="GO" id="GO:0030974">
    <property type="term" value="P:thiamine pyrophosphate transmembrane transport"/>
    <property type="evidence" value="ECO:0000250"/>
    <property type="project" value="UniProtKB"/>
</dbReference>
<dbReference type="FunFam" id="1.50.40.10:FF:000011">
    <property type="entry name" value="Mitochondrial thiamine pyrophosphate carrier 1"/>
    <property type="match status" value="1"/>
</dbReference>
<dbReference type="Gene3D" id="1.50.40.10">
    <property type="entry name" value="Mitochondrial carrier domain"/>
    <property type="match status" value="1"/>
</dbReference>
<dbReference type="InterPro" id="IPR002067">
    <property type="entry name" value="Mit_carrier"/>
</dbReference>
<dbReference type="InterPro" id="IPR018108">
    <property type="entry name" value="Mitochondrial_sb/sol_carrier"/>
</dbReference>
<dbReference type="InterPro" id="IPR023395">
    <property type="entry name" value="Mt_carrier_dom_sf"/>
</dbReference>
<dbReference type="PANTHER" id="PTHR24089">
    <property type="entry name" value="SOLUTE CARRIER FAMILY 25"/>
    <property type="match status" value="1"/>
</dbReference>
<dbReference type="Pfam" id="PF00153">
    <property type="entry name" value="Mito_carr"/>
    <property type="match status" value="3"/>
</dbReference>
<dbReference type="PRINTS" id="PR00926">
    <property type="entry name" value="MITOCARRIER"/>
</dbReference>
<dbReference type="SUPFAM" id="SSF103506">
    <property type="entry name" value="Mitochondrial carrier"/>
    <property type="match status" value="1"/>
</dbReference>
<dbReference type="PROSITE" id="PS50920">
    <property type="entry name" value="SOLCAR"/>
    <property type="match status" value="3"/>
</dbReference>
<accession>Q5NVC1</accession>